<reference key="1">
    <citation type="journal article" date="1996" name="Yeast">
        <title>Sequence analysis of the 43 kb CRM1-YLM9-PET54-DIE2-SMI1-PHO81-YHB4-PFK1 region from the right arm of Saccharomyces cerevisiae chromosome VII.</title>
        <authorList>
            <person name="van der Aart Q.J.M."/>
            <person name="Kleine K."/>
            <person name="Steensma H.Y."/>
        </authorList>
    </citation>
    <scope>NUCLEOTIDE SEQUENCE [GENOMIC DNA]</scope>
    <source>
        <strain>ATCC 204508 / S288c</strain>
    </source>
</reference>
<reference key="2">
    <citation type="journal article" date="1997" name="Nature">
        <title>The nucleotide sequence of Saccharomyces cerevisiae chromosome VII.</title>
        <authorList>
            <person name="Tettelin H."/>
            <person name="Agostoni-Carbone M.L."/>
            <person name="Albermann K."/>
            <person name="Albers M."/>
            <person name="Arroyo J."/>
            <person name="Backes U."/>
            <person name="Barreiros T."/>
            <person name="Bertani I."/>
            <person name="Bjourson A.J."/>
            <person name="Brueckner M."/>
            <person name="Bruschi C.V."/>
            <person name="Carignani G."/>
            <person name="Castagnoli L."/>
            <person name="Cerdan E."/>
            <person name="Clemente M.L."/>
            <person name="Coblenz A."/>
            <person name="Coglievina M."/>
            <person name="Coissac E."/>
            <person name="Defoor E."/>
            <person name="Del Bino S."/>
            <person name="Delius H."/>
            <person name="Delneri D."/>
            <person name="de Wergifosse P."/>
            <person name="Dujon B."/>
            <person name="Durand P."/>
            <person name="Entian K.-D."/>
            <person name="Eraso P."/>
            <person name="Escribano V."/>
            <person name="Fabiani L."/>
            <person name="Fartmann B."/>
            <person name="Feroli F."/>
            <person name="Feuermann M."/>
            <person name="Frontali L."/>
            <person name="Garcia-Gonzalez M."/>
            <person name="Garcia-Saez M.I."/>
            <person name="Goffeau A."/>
            <person name="Guerreiro P."/>
            <person name="Hani J."/>
            <person name="Hansen M."/>
            <person name="Hebling U."/>
            <person name="Hernandez K."/>
            <person name="Heumann K."/>
            <person name="Hilger F."/>
            <person name="Hofmann B."/>
            <person name="Indge K.J."/>
            <person name="James C.M."/>
            <person name="Klima R."/>
            <person name="Koetter P."/>
            <person name="Kramer B."/>
            <person name="Kramer W."/>
            <person name="Lauquin G."/>
            <person name="Leuther H."/>
            <person name="Louis E.J."/>
            <person name="Maillier E."/>
            <person name="Marconi A."/>
            <person name="Martegani E."/>
            <person name="Mazon M.J."/>
            <person name="Mazzoni C."/>
            <person name="McReynolds A.D.K."/>
            <person name="Melchioretto P."/>
            <person name="Mewes H.-W."/>
            <person name="Minenkova O."/>
            <person name="Mueller-Auer S."/>
            <person name="Nawrocki A."/>
            <person name="Netter P."/>
            <person name="Neu R."/>
            <person name="Nombela C."/>
            <person name="Oliver S.G."/>
            <person name="Panzeri L."/>
            <person name="Paoluzi S."/>
            <person name="Plevani P."/>
            <person name="Portetelle D."/>
            <person name="Portillo F."/>
            <person name="Potier S."/>
            <person name="Purnelle B."/>
            <person name="Rieger M."/>
            <person name="Riles L."/>
            <person name="Rinaldi T."/>
            <person name="Robben J."/>
            <person name="Rodrigues-Pousada C."/>
            <person name="Rodriguez-Belmonte E."/>
            <person name="Rodriguez-Torres A.M."/>
            <person name="Rose M."/>
            <person name="Ruzzi M."/>
            <person name="Saliola M."/>
            <person name="Sanchez-Perez M."/>
            <person name="Schaefer B."/>
            <person name="Schaefer M."/>
            <person name="Scharfe M."/>
            <person name="Schmidheini T."/>
            <person name="Schreer A."/>
            <person name="Skala J."/>
            <person name="Souciet J.-L."/>
            <person name="Steensma H.Y."/>
            <person name="Talla E."/>
            <person name="Thierry A."/>
            <person name="Vandenbol M."/>
            <person name="van der Aart Q.J.M."/>
            <person name="Van Dyck L."/>
            <person name="Vanoni M."/>
            <person name="Verhasselt P."/>
            <person name="Voet M."/>
            <person name="Volckaert G."/>
            <person name="Wambutt R."/>
            <person name="Watson M.D."/>
            <person name="Weber N."/>
            <person name="Wedler E."/>
            <person name="Wedler H."/>
            <person name="Wipfli P."/>
            <person name="Wolf K."/>
            <person name="Wright L.F."/>
            <person name="Zaccaria P."/>
            <person name="Zimmermann M."/>
            <person name="Zollner A."/>
            <person name="Kleine K."/>
        </authorList>
    </citation>
    <scope>NUCLEOTIDE SEQUENCE [LARGE SCALE GENOMIC DNA]</scope>
    <source>
        <strain>ATCC 204508 / S288c</strain>
    </source>
</reference>
<reference key="3">
    <citation type="journal article" date="2014" name="G3 (Bethesda)">
        <title>The reference genome sequence of Saccharomyces cerevisiae: Then and now.</title>
        <authorList>
            <person name="Engel S.R."/>
            <person name="Dietrich F.S."/>
            <person name="Fisk D.G."/>
            <person name="Binkley G."/>
            <person name="Balakrishnan R."/>
            <person name="Costanzo M.C."/>
            <person name="Dwight S.S."/>
            <person name="Hitz B.C."/>
            <person name="Karra K."/>
            <person name="Nash R.S."/>
            <person name="Weng S."/>
            <person name="Wong E.D."/>
            <person name="Lloyd P."/>
            <person name="Skrzypek M.S."/>
            <person name="Miyasato S.R."/>
            <person name="Simison M."/>
            <person name="Cherry J.M."/>
        </authorList>
    </citation>
    <scope>GENOME REANNOTATION</scope>
    <source>
        <strain>ATCC 204508 / S288c</strain>
    </source>
</reference>
<reference key="4">
    <citation type="journal article" date="2000" name="Yeast">
        <title>Expression of the AZR1 gene (ORF YGR224w), encoding a plasma membrane transporter of the major facilitator superfamily, is required for adaptation to acetic acid and resistance to azoles in Saccharomyces cerevisiae.</title>
        <authorList>
            <person name="Tenreiro S."/>
            <person name="Rosa P.C."/>
            <person name="Viegas C.A."/>
            <person name="Sa-Correia I."/>
        </authorList>
    </citation>
    <scope>FUNCTION</scope>
    <scope>SUBCELLULAR LOCATION</scope>
</reference>
<reference key="5">
    <citation type="journal article" date="2003" name="J. Biol. Chem.">
        <title>A general strategy to uncover transcription factor properties identifies a new regulator of drug resistance in yeast.</title>
        <authorList>
            <person name="Hikkel I."/>
            <person name="Lucau-Danila A."/>
            <person name="Delaveau T."/>
            <person name="Marc P."/>
            <person name="Devaux F."/>
            <person name="Jacq C."/>
        </authorList>
    </citation>
    <scope>INDUCTION</scope>
</reference>
<reference key="6">
    <citation type="journal article" date="2006" name="Proc. Natl. Acad. Sci. U.S.A.">
        <title>A global topology map of the Saccharomyces cerevisiae membrane proteome.</title>
        <authorList>
            <person name="Kim H."/>
            <person name="Melen K."/>
            <person name="Oesterberg M."/>
            <person name="von Heijne G."/>
        </authorList>
    </citation>
    <scope>TOPOLOGY [LARGE SCALE ANALYSIS]</scope>
    <source>
        <strain>ATCC 208353 / W303-1A</strain>
    </source>
</reference>
<keyword id="KW-1003">Cell membrane</keyword>
<keyword id="KW-0472">Membrane</keyword>
<keyword id="KW-1185">Reference proteome</keyword>
<keyword id="KW-0812">Transmembrane</keyword>
<keyword id="KW-1133">Transmembrane helix</keyword>
<keyword id="KW-0813">Transport</keyword>
<sequence length="613" mass="67169">MKGEPKTYSMSDLSYYGEKAQQQNEKQQKQYVVRRNSTQSTSKQNVSVVLEDNASESNELPKGFILYASLIALALSLFLAALDIMIVSTIIEEVAKQFGSYSEIGWLFTGYSLPNALLALIWGRIATPIGFKETMLFAIVIFEIGSLISALANSMSMLIGGRVIAGVGGCGIQSLSFVIGSTLVEESQRGILIAVLSCSFAIASVVGPFLGGVFTSSVTWRWCFYVNLPIGGLAFFLFLFFYNPGLSTFQETMDNIRKFPSQFIEIVRNVAYHLLKIKGFSKLNGWRKPFMELIFMYDIIEFVFCSAGFTCILLAFTFGGNRYAWNSASIIILFIIGIVLVVLAGIYDFLVFPKFNIVKATPHYQPLMSWTNIKKPGIFTVNIALFLTCAGYISQFTYIVQYFQLIYNDSAWRAAVHLVACIISTVVTAILCGAITDKTRQIKPIIVISSIFGVVGAGILTLLNNNANNSAHIGLLILPGVAFGGLAQSSMLASQIQLDKKSPTFRSDFVSITTFNTFCKNLGQALGGVISNTVFSAAAIKKLTKANIQLPDGTTVDNLVIYRQTNFDGSHSKLGNIISESLTDVFYMALGFYALSLIFAVFASNKKVTASLR</sequence>
<organism>
    <name type="scientific">Saccharomyces cerevisiae (strain ATCC 204508 / S288c)</name>
    <name type="common">Baker's yeast</name>
    <dbReference type="NCBI Taxonomy" id="559292"/>
    <lineage>
        <taxon>Eukaryota</taxon>
        <taxon>Fungi</taxon>
        <taxon>Dikarya</taxon>
        <taxon>Ascomycota</taxon>
        <taxon>Saccharomycotina</taxon>
        <taxon>Saccharomycetes</taxon>
        <taxon>Saccharomycetales</taxon>
        <taxon>Saccharomycetaceae</taxon>
        <taxon>Saccharomyces</taxon>
    </lineage>
</organism>
<proteinExistence type="evidence at protein level"/>
<comment type="function">
    <text evidence="3">Transporter protein required for adaptation to high stress imposed by low-chain organic acids, in particular by acetic acid, and for resistance to azoles, especially to ketoconazole and fluconazole.</text>
</comment>
<comment type="subcellular location">
    <subcellularLocation>
        <location evidence="3">Cell membrane</location>
        <topology evidence="3">Multi-pass membrane protein</topology>
    </subcellularLocation>
</comment>
<comment type="induction">
    <text evidence="4">Transcriptionally regulated by PDR8.</text>
</comment>
<comment type="similarity">
    <text evidence="5">Belongs to the major facilitator superfamily.</text>
</comment>
<gene>
    <name type="primary">AZR1</name>
    <name type="ordered locus">YGR224W</name>
    <name type="ORF">G8537</name>
</gene>
<accession>P50080</accession>
<accession>D6VV06</accession>
<dbReference type="EMBL" id="X87941">
    <property type="protein sequence ID" value="CAA61172.1"/>
    <property type="molecule type" value="Genomic_DNA"/>
</dbReference>
<dbReference type="EMBL" id="Z73009">
    <property type="protein sequence ID" value="CAA97252.1"/>
    <property type="molecule type" value="Genomic_DNA"/>
</dbReference>
<dbReference type="EMBL" id="BK006941">
    <property type="protein sequence ID" value="DAA08317.1"/>
    <property type="molecule type" value="Genomic_DNA"/>
</dbReference>
<dbReference type="PIR" id="S57687">
    <property type="entry name" value="S57687"/>
</dbReference>
<dbReference type="RefSeq" id="NP_011740.3">
    <property type="nucleotide sequence ID" value="NM_001181353.3"/>
</dbReference>
<dbReference type="SMR" id="P50080"/>
<dbReference type="BioGRID" id="33477">
    <property type="interactions" value="84"/>
</dbReference>
<dbReference type="DIP" id="DIP-7543N"/>
<dbReference type="FunCoup" id="P50080">
    <property type="interactions" value="77"/>
</dbReference>
<dbReference type="IntAct" id="P50080">
    <property type="interactions" value="3"/>
</dbReference>
<dbReference type="STRING" id="4932.YGR224W"/>
<dbReference type="TCDB" id="2.A.1.3.53">
    <property type="family name" value="the major facilitator superfamily (mfs)"/>
</dbReference>
<dbReference type="CarbonylDB" id="P50080"/>
<dbReference type="PaxDb" id="4932-YGR224W"/>
<dbReference type="EnsemblFungi" id="YGR224W_mRNA">
    <property type="protein sequence ID" value="YGR224W"/>
    <property type="gene ID" value="YGR224W"/>
</dbReference>
<dbReference type="GeneID" id="853139"/>
<dbReference type="KEGG" id="sce:YGR224W"/>
<dbReference type="AGR" id="SGD:S000003456"/>
<dbReference type="SGD" id="S000003456">
    <property type="gene designation" value="AZR1"/>
</dbReference>
<dbReference type="VEuPathDB" id="FungiDB:YGR224W"/>
<dbReference type="eggNOG" id="KOG0254">
    <property type="taxonomic scope" value="Eukaryota"/>
</dbReference>
<dbReference type="GeneTree" id="ENSGT00940000176547"/>
<dbReference type="HOGENOM" id="CLU_000960_22_1_1"/>
<dbReference type="InParanoid" id="P50080"/>
<dbReference type="OMA" id="YKMDENA"/>
<dbReference type="OrthoDB" id="10021397at2759"/>
<dbReference type="BioCyc" id="YEAST:G3O-30905-MONOMER"/>
<dbReference type="BioGRID-ORCS" id="853139">
    <property type="hits" value="2 hits in 10 CRISPR screens"/>
</dbReference>
<dbReference type="PRO" id="PR:P50080"/>
<dbReference type="Proteomes" id="UP000002311">
    <property type="component" value="Chromosome VII"/>
</dbReference>
<dbReference type="RNAct" id="P50080">
    <property type="molecule type" value="protein"/>
</dbReference>
<dbReference type="GO" id="GO:0071944">
    <property type="term" value="C:cell periphery"/>
    <property type="evidence" value="ECO:0007005"/>
    <property type="project" value="SGD"/>
</dbReference>
<dbReference type="GO" id="GO:0005886">
    <property type="term" value="C:plasma membrane"/>
    <property type="evidence" value="ECO:0000314"/>
    <property type="project" value="SGD"/>
</dbReference>
<dbReference type="GO" id="GO:1901474">
    <property type="term" value="F:azole transmembrane transporter activity"/>
    <property type="evidence" value="ECO:0000315"/>
    <property type="project" value="SGD"/>
</dbReference>
<dbReference type="GO" id="GO:0022857">
    <property type="term" value="F:transmembrane transporter activity"/>
    <property type="evidence" value="ECO:0000318"/>
    <property type="project" value="GO_Central"/>
</dbReference>
<dbReference type="GO" id="GO:0045117">
    <property type="term" value="P:azole transmembrane transport"/>
    <property type="evidence" value="ECO:0000315"/>
    <property type="project" value="SGD"/>
</dbReference>
<dbReference type="GO" id="GO:0055085">
    <property type="term" value="P:transmembrane transport"/>
    <property type="evidence" value="ECO:0000318"/>
    <property type="project" value="GO_Central"/>
</dbReference>
<dbReference type="CDD" id="cd17502">
    <property type="entry name" value="MFS_Azr1_MDR_like"/>
    <property type="match status" value="1"/>
</dbReference>
<dbReference type="FunFam" id="1.20.1250.20:FF:000373">
    <property type="entry name" value="Vacuolar basic amino acid transporter"/>
    <property type="match status" value="1"/>
</dbReference>
<dbReference type="Gene3D" id="1.20.1250.20">
    <property type="entry name" value="MFS general substrate transporter like domains"/>
    <property type="match status" value="2"/>
</dbReference>
<dbReference type="InterPro" id="IPR011701">
    <property type="entry name" value="MFS"/>
</dbReference>
<dbReference type="InterPro" id="IPR020846">
    <property type="entry name" value="MFS_dom"/>
</dbReference>
<dbReference type="InterPro" id="IPR036259">
    <property type="entry name" value="MFS_trans_sf"/>
</dbReference>
<dbReference type="PANTHER" id="PTHR23501:SF198">
    <property type="entry name" value="AZOLE RESISTANCE PROTEIN 1-RELATED"/>
    <property type="match status" value="1"/>
</dbReference>
<dbReference type="PANTHER" id="PTHR23501">
    <property type="entry name" value="MAJOR FACILITATOR SUPERFAMILY"/>
    <property type="match status" value="1"/>
</dbReference>
<dbReference type="Pfam" id="PF07690">
    <property type="entry name" value="MFS_1"/>
    <property type="match status" value="1"/>
</dbReference>
<dbReference type="SUPFAM" id="SSF103473">
    <property type="entry name" value="MFS general substrate transporter"/>
    <property type="match status" value="2"/>
</dbReference>
<dbReference type="PROSITE" id="PS50850">
    <property type="entry name" value="MFS"/>
    <property type="match status" value="1"/>
</dbReference>
<evidence type="ECO:0000255" key="1"/>
<evidence type="ECO:0000256" key="2">
    <source>
        <dbReference type="SAM" id="MobiDB-lite"/>
    </source>
</evidence>
<evidence type="ECO:0000269" key="3">
    <source>
    </source>
</evidence>
<evidence type="ECO:0000269" key="4">
    <source>
    </source>
</evidence>
<evidence type="ECO:0000305" key="5"/>
<feature type="chain" id="PRO_0000173426" description="Azole resistance protein 1">
    <location>
        <begin position="1"/>
        <end position="613"/>
    </location>
</feature>
<feature type="topological domain" description="Extracellular" evidence="1">
    <location>
        <begin position="1"/>
        <end position="70"/>
    </location>
</feature>
<feature type="transmembrane region" description="Helical" evidence="1">
    <location>
        <begin position="71"/>
        <end position="91"/>
    </location>
</feature>
<feature type="topological domain" description="Cytoplasmic" evidence="1">
    <location>
        <begin position="92"/>
        <end position="102"/>
    </location>
</feature>
<feature type="transmembrane region" description="Helical" evidence="1">
    <location>
        <begin position="103"/>
        <end position="123"/>
    </location>
</feature>
<feature type="topological domain" description="Extracellular" evidence="1">
    <location>
        <begin position="124"/>
        <end position="134"/>
    </location>
</feature>
<feature type="transmembrane region" description="Helical" evidence="1">
    <location>
        <begin position="135"/>
        <end position="155"/>
    </location>
</feature>
<feature type="topological domain" description="Cytoplasmic" evidence="1">
    <location>
        <begin position="156"/>
        <end position="163"/>
    </location>
</feature>
<feature type="transmembrane region" description="Helical" evidence="1">
    <location>
        <begin position="164"/>
        <end position="184"/>
    </location>
</feature>
<feature type="topological domain" description="Extracellular" evidence="1">
    <location>
        <begin position="185"/>
        <end position="189"/>
    </location>
</feature>
<feature type="transmembrane region" description="Helical" evidence="1">
    <location>
        <begin position="190"/>
        <end position="210"/>
    </location>
</feature>
<feature type="topological domain" description="Cytoplasmic" evidence="1">
    <location>
        <begin position="211"/>
        <end position="221"/>
    </location>
</feature>
<feature type="transmembrane region" description="Helical" evidence="1">
    <location>
        <begin position="222"/>
        <end position="242"/>
    </location>
</feature>
<feature type="topological domain" description="Extracellular" evidence="1">
    <location>
        <begin position="243"/>
        <end position="298"/>
    </location>
</feature>
<feature type="transmembrane region" description="Helical" evidence="1">
    <location>
        <begin position="299"/>
        <end position="319"/>
    </location>
</feature>
<feature type="topological domain" description="Cytoplasmic" evidence="1">
    <location>
        <begin position="320"/>
        <end position="329"/>
    </location>
</feature>
<feature type="transmembrane region" description="Helical" evidence="1">
    <location>
        <begin position="330"/>
        <end position="350"/>
    </location>
</feature>
<feature type="topological domain" description="Extracellular" evidence="1">
    <location>
        <begin position="351"/>
        <end position="375"/>
    </location>
</feature>
<feature type="transmembrane region" description="Helical" evidence="1">
    <location>
        <begin position="376"/>
        <end position="396"/>
    </location>
</feature>
<feature type="topological domain" description="Cytoplasmic" evidence="1">
    <location>
        <begin position="397"/>
        <end position="414"/>
    </location>
</feature>
<feature type="transmembrane region" description="Helical" evidence="1">
    <location>
        <begin position="415"/>
        <end position="435"/>
    </location>
</feature>
<feature type="topological domain" description="Extracellular" evidence="1">
    <location>
        <begin position="436"/>
        <end position="443"/>
    </location>
</feature>
<feature type="transmembrane region" description="Helical" evidence="1">
    <location>
        <begin position="444"/>
        <end position="464"/>
    </location>
</feature>
<feature type="topological domain" description="Cytoplasmic" evidence="1">
    <location>
        <begin position="465"/>
        <end position="472"/>
    </location>
</feature>
<feature type="transmembrane region" description="Helical" evidence="1">
    <location>
        <begin position="473"/>
        <end position="493"/>
    </location>
</feature>
<feature type="topological domain" description="Extracellular" evidence="1">
    <location>
        <begin position="494"/>
        <end position="581"/>
    </location>
</feature>
<feature type="transmembrane region" description="Helical" evidence="1">
    <location>
        <begin position="582"/>
        <end position="602"/>
    </location>
</feature>
<feature type="topological domain" description="Cytoplasmic" evidence="1">
    <location>
        <begin position="603"/>
        <end position="613"/>
    </location>
</feature>
<feature type="region of interest" description="Disordered" evidence="2">
    <location>
        <begin position="1"/>
        <end position="38"/>
    </location>
</feature>
<name>AZR1_YEAST</name>
<protein>
    <recommendedName>
        <fullName>Azole resistance protein 1</fullName>
    </recommendedName>
</protein>